<reference key="1">
    <citation type="journal article" date="2005" name="DNA Res.">
        <title>Complete genome sequence of the facultative anaerobic magnetotactic bacterium Magnetospirillum sp. strain AMB-1.</title>
        <authorList>
            <person name="Matsunaga T."/>
            <person name="Okamura Y."/>
            <person name="Fukuda Y."/>
            <person name="Wahyudi A.T."/>
            <person name="Murase Y."/>
            <person name="Takeyama H."/>
        </authorList>
    </citation>
    <scope>NUCLEOTIDE SEQUENCE [LARGE SCALE GENOMIC DNA]</scope>
    <source>
        <strain>ATCC 700264 / AMB-1</strain>
    </source>
</reference>
<proteinExistence type="inferred from homology"/>
<accession>Q2W3L2</accession>
<name>BIOF_PARM1</name>
<feature type="chain" id="PRO_0000381015" description="Putative 8-amino-7-oxononanoate synthase">
    <location>
        <begin position="1"/>
        <end position="392"/>
    </location>
</feature>
<feature type="binding site" evidence="1">
    <location>
        <position position="22"/>
    </location>
    <ligand>
        <name>substrate</name>
    </ligand>
</feature>
<feature type="binding site" evidence="1">
    <location>
        <begin position="109"/>
        <end position="110"/>
    </location>
    <ligand>
        <name>pyridoxal 5'-phosphate</name>
        <dbReference type="ChEBI" id="CHEBI:597326"/>
    </ligand>
</feature>
<feature type="binding site" evidence="1">
    <location>
        <position position="139"/>
    </location>
    <ligand>
        <name>substrate</name>
    </ligand>
</feature>
<feature type="binding site" evidence="1">
    <location>
        <position position="187"/>
    </location>
    <ligand>
        <name>pyridoxal 5'-phosphate</name>
        <dbReference type="ChEBI" id="CHEBI:597326"/>
    </ligand>
</feature>
<feature type="binding site" evidence="1">
    <location>
        <begin position="212"/>
        <end position="215"/>
    </location>
    <ligand>
        <name>pyridoxal 5'-phosphate</name>
        <dbReference type="ChEBI" id="CHEBI:597326"/>
    </ligand>
</feature>
<feature type="binding site" evidence="1">
    <location>
        <begin position="239"/>
        <end position="242"/>
    </location>
    <ligand>
        <name>pyridoxal 5'-phosphate</name>
        <dbReference type="ChEBI" id="CHEBI:597326"/>
    </ligand>
</feature>
<feature type="binding site" evidence="1">
    <location>
        <position position="356"/>
    </location>
    <ligand>
        <name>substrate</name>
    </ligand>
</feature>
<feature type="modified residue" description="N6-(pyridoxal phosphate)lysine" evidence="1">
    <location>
        <position position="242"/>
    </location>
</feature>
<protein>
    <recommendedName>
        <fullName>Putative 8-amino-7-oxononanoate synthase</fullName>
        <shortName>AONS</shortName>
        <ecNumber>2.3.1.47</ecNumber>
    </recommendedName>
    <alternativeName>
        <fullName>7-keto-8-amino-pelargonic acid synthase</fullName>
        <shortName>7-KAP synthase</shortName>
    </alternativeName>
    <alternativeName>
        <fullName>8-amino-7-ketopelargonate synthase</fullName>
    </alternativeName>
</protein>
<evidence type="ECO:0000250" key="1"/>
<evidence type="ECO:0000305" key="2"/>
<organism>
    <name type="scientific">Paramagnetospirillum magneticum (strain ATCC 700264 / AMB-1)</name>
    <name type="common">Magnetospirillum magneticum</name>
    <dbReference type="NCBI Taxonomy" id="342108"/>
    <lineage>
        <taxon>Bacteria</taxon>
        <taxon>Pseudomonadati</taxon>
        <taxon>Pseudomonadota</taxon>
        <taxon>Alphaproteobacteria</taxon>
        <taxon>Rhodospirillales</taxon>
        <taxon>Magnetospirillaceae</taxon>
        <taxon>Paramagnetospirillum</taxon>
    </lineage>
</organism>
<sequence>MKGLDDSIGRFLDGLDQAGRKRVLRPVDPLPAGRVRVGGRELVNFSSNDYLGLSRHPEVVERSRRWLNEYGAGSGASRLVTGHLAAMEALEAKIARCKQTEAALILASGWQCNASVLPALLDKALWGAEPLVFADKLIHASLHAGLELSGARRYRYRHDDLDHLESLLKAHADKEGPRFIVTETVFSMDGDVTDMAALAALASRWDAFLYVDEAHATGVLGANGFGLSPGMGAELAMGTFSKGLGSFGAYVACSARLRHYLINRASGLIYATGLPPAVLGAIDAALDLVPRLEGERTRLQMMGRRLRDGLRAAGLDTGPSASQIVPLILGDEGRTLAVAKALEDRGILGIAIRPPTVPPGTSRIRFALSAVHSDADLDRLLAAILDAVEATP</sequence>
<dbReference type="EC" id="2.3.1.47"/>
<dbReference type="EMBL" id="AP007255">
    <property type="protein sequence ID" value="BAE51563.1"/>
    <property type="molecule type" value="Genomic_DNA"/>
</dbReference>
<dbReference type="RefSeq" id="WP_011385138.1">
    <property type="nucleotide sequence ID" value="NC_007626.1"/>
</dbReference>
<dbReference type="SMR" id="Q2W3L2"/>
<dbReference type="STRING" id="342108.amb2759"/>
<dbReference type="KEGG" id="mag:amb2759"/>
<dbReference type="HOGENOM" id="CLU_015846_11_2_5"/>
<dbReference type="OrthoDB" id="9807157at2"/>
<dbReference type="UniPathway" id="UPA00078"/>
<dbReference type="Proteomes" id="UP000007058">
    <property type="component" value="Chromosome"/>
</dbReference>
<dbReference type="GO" id="GO:0008710">
    <property type="term" value="F:8-amino-7-oxononanoate synthase activity"/>
    <property type="evidence" value="ECO:0007669"/>
    <property type="project" value="UniProtKB-EC"/>
</dbReference>
<dbReference type="GO" id="GO:0030170">
    <property type="term" value="F:pyridoxal phosphate binding"/>
    <property type="evidence" value="ECO:0007669"/>
    <property type="project" value="InterPro"/>
</dbReference>
<dbReference type="GO" id="GO:0009102">
    <property type="term" value="P:biotin biosynthetic process"/>
    <property type="evidence" value="ECO:0007669"/>
    <property type="project" value="UniProtKB-UniPathway"/>
</dbReference>
<dbReference type="CDD" id="cd06454">
    <property type="entry name" value="KBL_like"/>
    <property type="match status" value="1"/>
</dbReference>
<dbReference type="Gene3D" id="3.90.1150.10">
    <property type="entry name" value="Aspartate Aminotransferase, domain 1"/>
    <property type="match status" value="1"/>
</dbReference>
<dbReference type="Gene3D" id="3.40.640.10">
    <property type="entry name" value="Type I PLP-dependent aspartate aminotransferase-like (Major domain)"/>
    <property type="match status" value="1"/>
</dbReference>
<dbReference type="InterPro" id="IPR001917">
    <property type="entry name" value="Aminotrans_II_pyridoxalP_BS"/>
</dbReference>
<dbReference type="InterPro" id="IPR004839">
    <property type="entry name" value="Aminotransferase_I/II_large"/>
</dbReference>
<dbReference type="InterPro" id="IPR050087">
    <property type="entry name" value="AON_synthase_class-II"/>
</dbReference>
<dbReference type="InterPro" id="IPR004723">
    <property type="entry name" value="AONS_Archaea/Proteobacteria"/>
</dbReference>
<dbReference type="InterPro" id="IPR015424">
    <property type="entry name" value="PyrdxlP-dep_Trfase"/>
</dbReference>
<dbReference type="InterPro" id="IPR015421">
    <property type="entry name" value="PyrdxlP-dep_Trfase_major"/>
</dbReference>
<dbReference type="InterPro" id="IPR015422">
    <property type="entry name" value="PyrdxlP-dep_Trfase_small"/>
</dbReference>
<dbReference type="NCBIfam" id="TIGR00858">
    <property type="entry name" value="bioF"/>
    <property type="match status" value="1"/>
</dbReference>
<dbReference type="PANTHER" id="PTHR13693:SF100">
    <property type="entry name" value="8-AMINO-7-OXONONANOATE SYNTHASE"/>
    <property type="match status" value="1"/>
</dbReference>
<dbReference type="PANTHER" id="PTHR13693">
    <property type="entry name" value="CLASS II AMINOTRANSFERASE/8-AMINO-7-OXONONANOATE SYNTHASE"/>
    <property type="match status" value="1"/>
</dbReference>
<dbReference type="Pfam" id="PF00155">
    <property type="entry name" value="Aminotran_1_2"/>
    <property type="match status" value="1"/>
</dbReference>
<dbReference type="SUPFAM" id="SSF53383">
    <property type="entry name" value="PLP-dependent transferases"/>
    <property type="match status" value="1"/>
</dbReference>
<dbReference type="PROSITE" id="PS00599">
    <property type="entry name" value="AA_TRANSFER_CLASS_2"/>
    <property type="match status" value="1"/>
</dbReference>
<keyword id="KW-0093">Biotin biosynthesis</keyword>
<keyword id="KW-0663">Pyridoxal phosphate</keyword>
<keyword id="KW-0808">Transferase</keyword>
<comment type="function">
    <text evidence="1">Catalyzes the decarboxylative condensation of pimeloyl-[acyl-carrier protein] and L-alanine to produce 8-amino-7-oxononanoate (AON), [acyl-carrier protein], and carbon dioxide.</text>
</comment>
<comment type="catalytic activity">
    <reaction>
        <text>6-carboxyhexanoyl-[ACP] + L-alanine + H(+) = (8S)-8-amino-7-oxononanoate + holo-[ACP] + CO2</text>
        <dbReference type="Rhea" id="RHEA:42288"/>
        <dbReference type="Rhea" id="RHEA-COMP:9685"/>
        <dbReference type="Rhea" id="RHEA-COMP:9955"/>
        <dbReference type="ChEBI" id="CHEBI:15378"/>
        <dbReference type="ChEBI" id="CHEBI:16526"/>
        <dbReference type="ChEBI" id="CHEBI:57972"/>
        <dbReference type="ChEBI" id="CHEBI:64479"/>
        <dbReference type="ChEBI" id="CHEBI:78846"/>
        <dbReference type="ChEBI" id="CHEBI:149468"/>
        <dbReference type="EC" id="2.3.1.47"/>
    </reaction>
</comment>
<comment type="cofactor">
    <cofactor evidence="1">
        <name>pyridoxal 5'-phosphate</name>
        <dbReference type="ChEBI" id="CHEBI:597326"/>
    </cofactor>
</comment>
<comment type="pathway">
    <text>Cofactor biosynthesis; biotin biosynthesis.</text>
</comment>
<comment type="subunit">
    <text evidence="1">Homodimer.</text>
</comment>
<comment type="similarity">
    <text evidence="2">Belongs to the class-II pyridoxal-phosphate-dependent aminotransferase family. BioF subfamily.</text>
</comment>
<gene>
    <name type="primary">bioF</name>
    <name type="ordered locus">amb2759</name>
</gene>